<reference key="1">
    <citation type="submission" date="2006-08" db="EMBL/GenBank/DDBJ databases">
        <title>Complete sequence of chromosome 1 of Burkholderia cenocepacia HI2424.</title>
        <authorList>
            <person name="Copeland A."/>
            <person name="Lucas S."/>
            <person name="Lapidus A."/>
            <person name="Barry K."/>
            <person name="Detter J.C."/>
            <person name="Glavina del Rio T."/>
            <person name="Hammon N."/>
            <person name="Israni S."/>
            <person name="Pitluck S."/>
            <person name="Chain P."/>
            <person name="Malfatti S."/>
            <person name="Shin M."/>
            <person name="Vergez L."/>
            <person name="Schmutz J."/>
            <person name="Larimer F."/>
            <person name="Land M."/>
            <person name="Hauser L."/>
            <person name="Kyrpides N."/>
            <person name="Kim E."/>
            <person name="LiPuma J.J."/>
            <person name="Gonzalez C.F."/>
            <person name="Konstantinidis K."/>
            <person name="Tiedje J.M."/>
            <person name="Richardson P."/>
        </authorList>
    </citation>
    <scope>NUCLEOTIDE SEQUENCE [LARGE SCALE GENOMIC DNA]</scope>
    <source>
        <strain>HI2424</strain>
    </source>
</reference>
<organism>
    <name type="scientific">Burkholderia cenocepacia (strain HI2424)</name>
    <dbReference type="NCBI Taxonomy" id="331272"/>
    <lineage>
        <taxon>Bacteria</taxon>
        <taxon>Pseudomonadati</taxon>
        <taxon>Pseudomonadota</taxon>
        <taxon>Betaproteobacteria</taxon>
        <taxon>Burkholderiales</taxon>
        <taxon>Burkholderiaceae</taxon>
        <taxon>Burkholderia</taxon>
        <taxon>Burkholderia cepacia complex</taxon>
    </lineage>
</organism>
<sequence>MKASRFFIGTLKEAPADAEIVSHKLMVRAGMIRRVAGGIYNYLPVGLRSIRKVEAIVREEMNRAGAIELLMPAVQPAELWQESGRWEQYGPELLRFKDRKDNDFVIGPTHEEVVTDIARNQIKSYRQMPVNFYQIQTKFRDEIRPRFGVMRGREFIMKDAYSFDKDAAGLNESYRKMYDAYVRIFTRLGLEFRAVAADSGSIGGNFSHEFHVIADTGEDAIAYCPTSEFAANVEAAEALPLIAERAAPAEAMEKVATPGKAKCEAVAELLSIPLERTIKSIVLATDNEGAEPTIWLVMLRGDHDLNEIKVSKLPGLKNHRFATEQEIVEWFGTPPGYLGPVGTKKPVKVIADRTVANMSDFVVGANEVDYHIAGVNWGRDLPEPEVADVRNVKKGDPSPDGKGVIDICRGIEVGHVFQLGTKYSEAMGATFLDESGKPQPMLMGCYGVGITRILGAAIEQNFDDKGIIWPESIAPFEVVLCPMGYDRSDMVRETADKLYAELVAAGIDVILDDRGERPGVMFADWELIGVPHRLVIGERGLKEGKIEYQGRRDAEATLLPADTAAAAVAEKIRAALAH</sequence>
<comment type="function">
    <text evidence="1">Catalyzes the attachment of proline to tRNA(Pro) in a two-step reaction: proline is first activated by ATP to form Pro-AMP and then transferred to the acceptor end of tRNA(Pro). As ProRS can inadvertently accommodate and process non-cognate amino acids such as alanine and cysteine, to avoid such errors it has two additional distinct editing activities against alanine. One activity is designated as 'pretransfer' editing and involves the tRNA(Pro)-independent hydrolysis of activated Ala-AMP. The other activity is designated 'posttransfer' editing and involves deacylation of mischarged Ala-tRNA(Pro). The misacylated Cys-tRNA(Pro) is not edited by ProRS.</text>
</comment>
<comment type="catalytic activity">
    <reaction evidence="1">
        <text>tRNA(Pro) + L-proline + ATP = L-prolyl-tRNA(Pro) + AMP + diphosphate</text>
        <dbReference type="Rhea" id="RHEA:14305"/>
        <dbReference type="Rhea" id="RHEA-COMP:9700"/>
        <dbReference type="Rhea" id="RHEA-COMP:9702"/>
        <dbReference type="ChEBI" id="CHEBI:30616"/>
        <dbReference type="ChEBI" id="CHEBI:33019"/>
        <dbReference type="ChEBI" id="CHEBI:60039"/>
        <dbReference type="ChEBI" id="CHEBI:78442"/>
        <dbReference type="ChEBI" id="CHEBI:78532"/>
        <dbReference type="ChEBI" id="CHEBI:456215"/>
        <dbReference type="EC" id="6.1.1.15"/>
    </reaction>
</comment>
<comment type="subunit">
    <text evidence="1">Homodimer.</text>
</comment>
<comment type="subcellular location">
    <subcellularLocation>
        <location evidence="1">Cytoplasm</location>
    </subcellularLocation>
</comment>
<comment type="domain">
    <text evidence="1">Consists of three domains: the N-terminal catalytic domain, the editing domain and the C-terminal anticodon-binding domain.</text>
</comment>
<comment type="similarity">
    <text evidence="1">Belongs to the class-II aminoacyl-tRNA synthetase family. ProS type 1 subfamily.</text>
</comment>
<feature type="chain" id="PRO_0000288315" description="Proline--tRNA ligase">
    <location>
        <begin position="1"/>
        <end position="578"/>
    </location>
</feature>
<gene>
    <name evidence="1" type="primary">proS</name>
    <name type="ordered locus">Bcen2424_0587</name>
</gene>
<dbReference type="EC" id="6.1.1.15" evidence="1"/>
<dbReference type="EMBL" id="CP000458">
    <property type="protein sequence ID" value="ABK07341.1"/>
    <property type="molecule type" value="Genomic_DNA"/>
</dbReference>
<dbReference type="RefSeq" id="WP_011694137.1">
    <property type="nucleotide sequence ID" value="NC_008542.1"/>
</dbReference>
<dbReference type="SMR" id="A0K4B4"/>
<dbReference type="KEGG" id="bch:Bcen2424_0587"/>
<dbReference type="HOGENOM" id="CLU_016739_0_0_4"/>
<dbReference type="GO" id="GO:0005829">
    <property type="term" value="C:cytosol"/>
    <property type="evidence" value="ECO:0007669"/>
    <property type="project" value="TreeGrafter"/>
</dbReference>
<dbReference type="GO" id="GO:0002161">
    <property type="term" value="F:aminoacyl-tRNA deacylase activity"/>
    <property type="evidence" value="ECO:0007669"/>
    <property type="project" value="InterPro"/>
</dbReference>
<dbReference type="GO" id="GO:0005524">
    <property type="term" value="F:ATP binding"/>
    <property type="evidence" value="ECO:0007669"/>
    <property type="project" value="UniProtKB-UniRule"/>
</dbReference>
<dbReference type="GO" id="GO:0004827">
    <property type="term" value="F:proline-tRNA ligase activity"/>
    <property type="evidence" value="ECO:0007669"/>
    <property type="project" value="UniProtKB-UniRule"/>
</dbReference>
<dbReference type="GO" id="GO:0006433">
    <property type="term" value="P:prolyl-tRNA aminoacylation"/>
    <property type="evidence" value="ECO:0007669"/>
    <property type="project" value="UniProtKB-UniRule"/>
</dbReference>
<dbReference type="CDD" id="cd04334">
    <property type="entry name" value="ProRS-INS"/>
    <property type="match status" value="1"/>
</dbReference>
<dbReference type="CDD" id="cd00861">
    <property type="entry name" value="ProRS_anticodon_short"/>
    <property type="match status" value="1"/>
</dbReference>
<dbReference type="CDD" id="cd00779">
    <property type="entry name" value="ProRS_core_prok"/>
    <property type="match status" value="1"/>
</dbReference>
<dbReference type="FunFam" id="3.30.930.10:FF:000043">
    <property type="entry name" value="Proline--tRNA ligase"/>
    <property type="match status" value="1"/>
</dbReference>
<dbReference type="FunFam" id="3.30.930.10:FF:000097">
    <property type="entry name" value="Proline--tRNA ligase"/>
    <property type="match status" value="1"/>
</dbReference>
<dbReference type="Gene3D" id="3.40.50.800">
    <property type="entry name" value="Anticodon-binding domain"/>
    <property type="match status" value="1"/>
</dbReference>
<dbReference type="Gene3D" id="3.30.930.10">
    <property type="entry name" value="Bira Bifunctional Protein, Domain 2"/>
    <property type="match status" value="2"/>
</dbReference>
<dbReference type="Gene3D" id="3.90.960.10">
    <property type="entry name" value="YbaK/aminoacyl-tRNA synthetase-associated domain"/>
    <property type="match status" value="1"/>
</dbReference>
<dbReference type="HAMAP" id="MF_01569">
    <property type="entry name" value="Pro_tRNA_synth_type1"/>
    <property type="match status" value="1"/>
</dbReference>
<dbReference type="InterPro" id="IPR002314">
    <property type="entry name" value="aa-tRNA-synt_IIb"/>
</dbReference>
<dbReference type="InterPro" id="IPR006195">
    <property type="entry name" value="aa-tRNA-synth_II"/>
</dbReference>
<dbReference type="InterPro" id="IPR045864">
    <property type="entry name" value="aa-tRNA-synth_II/BPL/LPL"/>
</dbReference>
<dbReference type="InterPro" id="IPR004154">
    <property type="entry name" value="Anticodon-bd"/>
</dbReference>
<dbReference type="InterPro" id="IPR036621">
    <property type="entry name" value="Anticodon-bd_dom_sf"/>
</dbReference>
<dbReference type="InterPro" id="IPR002316">
    <property type="entry name" value="Pro-tRNA-ligase_IIa"/>
</dbReference>
<dbReference type="InterPro" id="IPR004500">
    <property type="entry name" value="Pro-tRNA-synth_IIa_bac-type"/>
</dbReference>
<dbReference type="InterPro" id="IPR023717">
    <property type="entry name" value="Pro-tRNA-Synthase_IIa_type1"/>
</dbReference>
<dbReference type="InterPro" id="IPR050062">
    <property type="entry name" value="Pro-tRNA_synthetase"/>
</dbReference>
<dbReference type="InterPro" id="IPR044140">
    <property type="entry name" value="ProRS_anticodon_short"/>
</dbReference>
<dbReference type="InterPro" id="IPR033730">
    <property type="entry name" value="ProRS_core_prok"/>
</dbReference>
<dbReference type="InterPro" id="IPR036754">
    <property type="entry name" value="YbaK/aa-tRNA-synt-asso_dom_sf"/>
</dbReference>
<dbReference type="InterPro" id="IPR007214">
    <property type="entry name" value="YbaK/aa-tRNA-synth-assoc-dom"/>
</dbReference>
<dbReference type="NCBIfam" id="NF006625">
    <property type="entry name" value="PRK09194.1"/>
    <property type="match status" value="1"/>
</dbReference>
<dbReference type="NCBIfam" id="TIGR00409">
    <property type="entry name" value="proS_fam_II"/>
    <property type="match status" value="1"/>
</dbReference>
<dbReference type="PANTHER" id="PTHR42753">
    <property type="entry name" value="MITOCHONDRIAL RIBOSOME PROTEIN L39/PROLYL-TRNA LIGASE FAMILY MEMBER"/>
    <property type="match status" value="1"/>
</dbReference>
<dbReference type="PANTHER" id="PTHR42753:SF2">
    <property type="entry name" value="PROLINE--TRNA LIGASE"/>
    <property type="match status" value="1"/>
</dbReference>
<dbReference type="Pfam" id="PF03129">
    <property type="entry name" value="HGTP_anticodon"/>
    <property type="match status" value="1"/>
</dbReference>
<dbReference type="Pfam" id="PF00587">
    <property type="entry name" value="tRNA-synt_2b"/>
    <property type="match status" value="1"/>
</dbReference>
<dbReference type="Pfam" id="PF04073">
    <property type="entry name" value="tRNA_edit"/>
    <property type="match status" value="1"/>
</dbReference>
<dbReference type="PIRSF" id="PIRSF001535">
    <property type="entry name" value="ProRS_1"/>
    <property type="match status" value="1"/>
</dbReference>
<dbReference type="PRINTS" id="PR01046">
    <property type="entry name" value="TRNASYNTHPRO"/>
</dbReference>
<dbReference type="SUPFAM" id="SSF52954">
    <property type="entry name" value="Class II aaRS ABD-related"/>
    <property type="match status" value="1"/>
</dbReference>
<dbReference type="SUPFAM" id="SSF55681">
    <property type="entry name" value="Class II aaRS and biotin synthetases"/>
    <property type="match status" value="1"/>
</dbReference>
<dbReference type="SUPFAM" id="SSF55826">
    <property type="entry name" value="YbaK/ProRS associated domain"/>
    <property type="match status" value="1"/>
</dbReference>
<dbReference type="PROSITE" id="PS50862">
    <property type="entry name" value="AA_TRNA_LIGASE_II"/>
    <property type="match status" value="1"/>
</dbReference>
<keyword id="KW-0030">Aminoacyl-tRNA synthetase</keyword>
<keyword id="KW-0067">ATP-binding</keyword>
<keyword id="KW-0963">Cytoplasm</keyword>
<keyword id="KW-0436">Ligase</keyword>
<keyword id="KW-0547">Nucleotide-binding</keyword>
<keyword id="KW-0648">Protein biosynthesis</keyword>
<evidence type="ECO:0000255" key="1">
    <source>
        <dbReference type="HAMAP-Rule" id="MF_01569"/>
    </source>
</evidence>
<protein>
    <recommendedName>
        <fullName evidence="1">Proline--tRNA ligase</fullName>
        <ecNumber evidence="1">6.1.1.15</ecNumber>
    </recommendedName>
    <alternativeName>
        <fullName evidence="1">Prolyl-tRNA synthetase</fullName>
        <shortName evidence="1">ProRS</shortName>
    </alternativeName>
</protein>
<accession>A0K4B4</accession>
<name>SYP_BURCH</name>
<proteinExistence type="inferred from homology"/>